<protein>
    <recommendedName>
        <fullName evidence="1">5-methyltetrahydropteroyltriglutamate--homocysteine methyltransferase</fullName>
        <ecNumber evidence="1">2.1.1.14</ecNumber>
    </recommendedName>
    <alternativeName>
        <fullName evidence="1">Cobalamin-independent methionine synthase</fullName>
    </alternativeName>
    <alternativeName>
        <fullName evidence="1">Methionine synthase, vitamin-B12 independent isozyme</fullName>
    </alternativeName>
</protein>
<comment type="function">
    <text evidence="1">Catalyzes the transfer of a methyl group from 5-methyltetrahydrofolate to homocysteine resulting in methionine formation.</text>
</comment>
<comment type="catalytic activity">
    <reaction evidence="1">
        <text>5-methyltetrahydropteroyltri-L-glutamate + L-homocysteine = tetrahydropteroyltri-L-glutamate + L-methionine</text>
        <dbReference type="Rhea" id="RHEA:21196"/>
        <dbReference type="ChEBI" id="CHEBI:57844"/>
        <dbReference type="ChEBI" id="CHEBI:58140"/>
        <dbReference type="ChEBI" id="CHEBI:58199"/>
        <dbReference type="ChEBI" id="CHEBI:58207"/>
        <dbReference type="EC" id="2.1.1.14"/>
    </reaction>
</comment>
<comment type="cofactor">
    <cofactor evidence="1">
        <name>Zn(2+)</name>
        <dbReference type="ChEBI" id="CHEBI:29105"/>
    </cofactor>
    <text evidence="1">Binds 1 zinc ion per subunit.</text>
</comment>
<comment type="pathway">
    <text evidence="1">Amino-acid biosynthesis; L-methionine biosynthesis via de novo pathway; L-methionine from L-homocysteine (MetE route): step 1/1.</text>
</comment>
<comment type="similarity">
    <text evidence="1">Belongs to the vitamin-B12 independent methionine synthase family.</text>
</comment>
<keyword id="KW-0028">Amino-acid biosynthesis</keyword>
<keyword id="KW-0479">Metal-binding</keyword>
<keyword id="KW-0486">Methionine biosynthesis</keyword>
<keyword id="KW-0489">Methyltransferase</keyword>
<keyword id="KW-0677">Repeat</keyword>
<keyword id="KW-0808">Transferase</keyword>
<keyword id="KW-0862">Zinc</keyword>
<evidence type="ECO:0000255" key="1">
    <source>
        <dbReference type="HAMAP-Rule" id="MF_00172"/>
    </source>
</evidence>
<dbReference type="EC" id="2.1.1.14" evidence="1"/>
<dbReference type="EMBL" id="CP000025">
    <property type="protein sequence ID" value="AAW35656.1"/>
    <property type="molecule type" value="Genomic_DNA"/>
</dbReference>
<dbReference type="RefSeq" id="WP_002860435.1">
    <property type="nucleotide sequence ID" value="NC_003912.7"/>
</dbReference>
<dbReference type="SMR" id="Q5HTR3"/>
<dbReference type="KEGG" id="cjr:CJE1335"/>
<dbReference type="HOGENOM" id="CLU_013175_0_0_7"/>
<dbReference type="UniPathway" id="UPA00051">
    <property type="reaction ID" value="UER00082"/>
</dbReference>
<dbReference type="GO" id="GO:0003871">
    <property type="term" value="F:5-methyltetrahydropteroyltriglutamate-homocysteine S-methyltransferase activity"/>
    <property type="evidence" value="ECO:0007669"/>
    <property type="project" value="UniProtKB-UniRule"/>
</dbReference>
<dbReference type="GO" id="GO:0008270">
    <property type="term" value="F:zinc ion binding"/>
    <property type="evidence" value="ECO:0007669"/>
    <property type="project" value="InterPro"/>
</dbReference>
<dbReference type="GO" id="GO:0009086">
    <property type="term" value="P:methionine biosynthetic process"/>
    <property type="evidence" value="ECO:0007669"/>
    <property type="project" value="UniProtKB-UniRule"/>
</dbReference>
<dbReference type="GO" id="GO:0032259">
    <property type="term" value="P:methylation"/>
    <property type="evidence" value="ECO:0007669"/>
    <property type="project" value="UniProtKB-KW"/>
</dbReference>
<dbReference type="CDD" id="cd03311">
    <property type="entry name" value="CIMS_C_terminal_like"/>
    <property type="match status" value="1"/>
</dbReference>
<dbReference type="CDD" id="cd03312">
    <property type="entry name" value="CIMS_N_terminal_like"/>
    <property type="match status" value="1"/>
</dbReference>
<dbReference type="Gene3D" id="3.20.20.210">
    <property type="match status" value="2"/>
</dbReference>
<dbReference type="HAMAP" id="MF_00172">
    <property type="entry name" value="Meth_synth"/>
    <property type="match status" value="1"/>
</dbReference>
<dbReference type="InterPro" id="IPR013215">
    <property type="entry name" value="Cbl-indep_Met_Synth_N"/>
</dbReference>
<dbReference type="InterPro" id="IPR006276">
    <property type="entry name" value="Cobalamin-indep_Met_synthase"/>
</dbReference>
<dbReference type="InterPro" id="IPR002629">
    <property type="entry name" value="Met_Synth_C/arc"/>
</dbReference>
<dbReference type="InterPro" id="IPR038071">
    <property type="entry name" value="UROD/MetE-like_sf"/>
</dbReference>
<dbReference type="NCBIfam" id="TIGR01371">
    <property type="entry name" value="met_syn_B12ind"/>
    <property type="match status" value="1"/>
</dbReference>
<dbReference type="NCBIfam" id="NF003556">
    <property type="entry name" value="PRK05222.1"/>
    <property type="match status" value="1"/>
</dbReference>
<dbReference type="PANTHER" id="PTHR30519">
    <property type="entry name" value="5-METHYLTETRAHYDROPTEROYLTRIGLUTAMATE--HOMOCYSTEINE METHYLTRANSFERASE"/>
    <property type="match status" value="1"/>
</dbReference>
<dbReference type="Pfam" id="PF08267">
    <property type="entry name" value="Meth_synt_1"/>
    <property type="match status" value="1"/>
</dbReference>
<dbReference type="Pfam" id="PF01717">
    <property type="entry name" value="Meth_synt_2"/>
    <property type="match status" value="1"/>
</dbReference>
<dbReference type="PIRSF" id="PIRSF000382">
    <property type="entry name" value="MeTrfase_B12_ind"/>
    <property type="match status" value="1"/>
</dbReference>
<dbReference type="SUPFAM" id="SSF51726">
    <property type="entry name" value="UROD/MetE-like"/>
    <property type="match status" value="2"/>
</dbReference>
<proteinExistence type="inferred from homology"/>
<name>METE_CAMJR</name>
<reference key="1">
    <citation type="journal article" date="2005" name="PLoS Biol.">
        <title>Major structural differences and novel potential virulence mechanisms from the genomes of multiple Campylobacter species.</title>
        <authorList>
            <person name="Fouts D.E."/>
            <person name="Mongodin E.F."/>
            <person name="Mandrell R.E."/>
            <person name="Miller W.G."/>
            <person name="Rasko D.A."/>
            <person name="Ravel J."/>
            <person name="Brinkac L.M."/>
            <person name="DeBoy R.T."/>
            <person name="Parker C.T."/>
            <person name="Daugherty S.C."/>
            <person name="Dodson R.J."/>
            <person name="Durkin A.S."/>
            <person name="Madupu R."/>
            <person name="Sullivan S.A."/>
            <person name="Shetty J.U."/>
            <person name="Ayodeji M.A."/>
            <person name="Shvartsbeyn A."/>
            <person name="Schatz M.C."/>
            <person name="Badger J.H."/>
            <person name="Fraser C.M."/>
            <person name="Nelson K.E."/>
        </authorList>
    </citation>
    <scope>NUCLEOTIDE SEQUENCE [LARGE SCALE GENOMIC DNA]</scope>
    <source>
        <strain>RM1221</strain>
    </source>
</reference>
<accession>Q5HTR3</accession>
<feature type="chain" id="PRO_1000017236" description="5-methyltetrahydropteroyltriglutamate--homocysteine methyltransferase">
    <location>
        <begin position="1"/>
        <end position="754"/>
    </location>
</feature>
<feature type="active site" description="Proton donor" evidence="1">
    <location>
        <position position="694"/>
    </location>
</feature>
<feature type="binding site" evidence="1">
    <location>
        <begin position="15"/>
        <end position="18"/>
    </location>
    <ligand>
        <name>5-methyltetrahydropteroyltri-L-glutamate</name>
        <dbReference type="ChEBI" id="CHEBI:58207"/>
    </ligand>
</feature>
<feature type="binding site" evidence="1">
    <location>
        <position position="114"/>
    </location>
    <ligand>
        <name>5-methyltetrahydropteroyltri-L-glutamate</name>
        <dbReference type="ChEBI" id="CHEBI:58207"/>
    </ligand>
</feature>
<feature type="binding site" evidence="1">
    <location>
        <begin position="430"/>
        <end position="432"/>
    </location>
    <ligand>
        <name>L-homocysteine</name>
        <dbReference type="ChEBI" id="CHEBI:58199"/>
    </ligand>
</feature>
<feature type="binding site" evidence="1">
    <location>
        <begin position="430"/>
        <end position="432"/>
    </location>
    <ligand>
        <name>L-methionine</name>
        <dbReference type="ChEBI" id="CHEBI:57844"/>
    </ligand>
</feature>
<feature type="binding site" evidence="1">
    <location>
        <position position="483"/>
    </location>
    <ligand>
        <name>L-homocysteine</name>
        <dbReference type="ChEBI" id="CHEBI:58199"/>
    </ligand>
</feature>
<feature type="binding site" evidence="1">
    <location>
        <position position="483"/>
    </location>
    <ligand>
        <name>L-methionine</name>
        <dbReference type="ChEBI" id="CHEBI:57844"/>
    </ligand>
</feature>
<feature type="binding site" evidence="1">
    <location>
        <begin position="514"/>
        <end position="515"/>
    </location>
    <ligand>
        <name>5-methyltetrahydropteroyltri-L-glutamate</name>
        <dbReference type="ChEBI" id="CHEBI:58207"/>
    </ligand>
</feature>
<feature type="binding site" evidence="1">
    <location>
        <position position="560"/>
    </location>
    <ligand>
        <name>5-methyltetrahydropteroyltri-L-glutamate</name>
        <dbReference type="ChEBI" id="CHEBI:58207"/>
    </ligand>
</feature>
<feature type="binding site" evidence="1">
    <location>
        <position position="598"/>
    </location>
    <ligand>
        <name>L-homocysteine</name>
        <dbReference type="ChEBI" id="CHEBI:58199"/>
    </ligand>
</feature>
<feature type="binding site" evidence="1">
    <location>
        <position position="598"/>
    </location>
    <ligand>
        <name>L-methionine</name>
        <dbReference type="ChEBI" id="CHEBI:57844"/>
    </ligand>
</feature>
<feature type="binding site" evidence="1">
    <location>
        <position position="604"/>
    </location>
    <ligand>
        <name>5-methyltetrahydropteroyltri-L-glutamate</name>
        <dbReference type="ChEBI" id="CHEBI:58207"/>
    </ligand>
</feature>
<feature type="binding site" evidence="1">
    <location>
        <position position="641"/>
    </location>
    <ligand>
        <name>Zn(2+)</name>
        <dbReference type="ChEBI" id="CHEBI:29105"/>
        <note>catalytic</note>
    </ligand>
</feature>
<feature type="binding site" evidence="1">
    <location>
        <position position="643"/>
    </location>
    <ligand>
        <name>Zn(2+)</name>
        <dbReference type="ChEBI" id="CHEBI:29105"/>
        <note>catalytic</note>
    </ligand>
</feature>
<feature type="binding site" evidence="1">
    <location>
        <position position="665"/>
    </location>
    <ligand>
        <name>Zn(2+)</name>
        <dbReference type="ChEBI" id="CHEBI:29105"/>
        <note>catalytic</note>
    </ligand>
</feature>
<feature type="binding site" evidence="1">
    <location>
        <position position="726"/>
    </location>
    <ligand>
        <name>Zn(2+)</name>
        <dbReference type="ChEBI" id="CHEBI:29105"/>
        <note>catalytic</note>
    </ligand>
</feature>
<organism>
    <name type="scientific">Campylobacter jejuni (strain RM1221)</name>
    <dbReference type="NCBI Taxonomy" id="195099"/>
    <lineage>
        <taxon>Bacteria</taxon>
        <taxon>Pseudomonadati</taxon>
        <taxon>Campylobacterota</taxon>
        <taxon>Epsilonproteobacteria</taxon>
        <taxon>Campylobacterales</taxon>
        <taxon>Campylobacteraceae</taxon>
        <taxon>Campylobacter</taxon>
    </lineage>
</organism>
<gene>
    <name evidence="1" type="primary">metE</name>
    <name type="ordered locus">CJE1335</name>
</gene>
<sequence length="754" mass="86980">MKNSIISYPRIGANRELKFAIEKYFKNQSSKEELLKSAKDLRIRHWQEIQKAGIDFIPSNDFSLYDNVLDAAVLFNIVHTKYKNLNLDALDEYFAQSRGYQGENGDVTALAMKKWFNTNYHYLVPECDNADIIALTGDKIFKEYLEAKELGIESKPVLIGIFTLFKLIAFKDEKTQKLAKEKLLNAYIELFDKLNELKVTWLELDEPYLVYDLSKEDIALFEEFYQELLNHKKDLKILLQSYFGDLRDIYPKLLESKFDALGLDFIEGKQSLALVQKYGFAKDKILFAGLINGKNIYTNDYAKSLKLIKELQKYTQNIILNTSCSLLHVPYSTEFESKLDSNYLKLFSFAKEKLQELKDLKEILNSSEENPLFRANQELFKNIPERLDEKVKARLKALKKEDFTRTPSFKERALIQKEFLKLPLLPTTTIGSFPQSADVRSNRLAFKQEKISAQNYTEFNQQKIKECIQIQEEIGLDVLVHGEFERNDMVEYFGENLKGFLFTQNGWVQSYGTRCVKPPVIWGDVSRTKPITLAWSKFAQSLSQKIVKGMLTGPVTILNWSFPREDISLKESTEQIALAIRDEVLDLENAGIKIIQIDEAALREKLPLRKSDWHSEYLDWAIPAFNLVHSGVKAKTQIHTHMCYSEFSDILKEIDAMDADVISFEASRSNLSLLDTLKAIRFKTEVGPGVYDIHSPRVPSVEELSLTIEKILNKLPKEQIWINPDCGLKTRAYEEVIASLKNLVTATQKIREQL</sequence>